<protein>
    <recommendedName>
        <fullName>Glyceraldehyde-3-phosphate dehydrogenase</fullName>
        <shortName>GAPDH</shortName>
        <ecNumber>1.2.1.12</ecNumber>
    </recommendedName>
</protein>
<gene>
    <name type="primary">GPD</name>
    <name type="ORF">CPC735_029060</name>
</gene>
<proteinExistence type="inferred from homology"/>
<evidence type="ECO:0000250" key="1"/>
<evidence type="ECO:0000255" key="2">
    <source>
        <dbReference type="PROSITE-ProRule" id="PRU10009"/>
    </source>
</evidence>
<evidence type="ECO:0000305" key="3"/>
<name>G3P_COCP7</name>
<accession>Q8J1H3</accession>
<accession>C5P820</accession>
<keyword id="KW-0963">Cytoplasm</keyword>
<keyword id="KW-0324">Glycolysis</keyword>
<keyword id="KW-0520">NAD</keyword>
<keyword id="KW-0560">Oxidoreductase</keyword>
<sequence length="337" mass="36400">MVVKVGINGFGRIGRIVFRNAVEHPEVEIVAVNDPFIETHYAAYMLKYDSTHGRFKGDVKFSENGLDVDGKHVRFYQERDPANIPWAETGADYVIESTGVFTTTEKASAHLKGGAKKVIISAPSADAPMFVMGVNNETYKSDIKVLSNASCTTNCLAPLAKVVNDNFGLVEGLMTTVHSYTATQKTVDGPSSKDWRGGRTAAQNIIPSSTGAAKAVGKVIPSLNGKLTGMSMRVPTSNVSVVDLTCRTDKSVTYDQIKEAMKKASANELKGIMSYSEDALVSSDLNGDPHSCIFDATAGIALNDHFIKLVAWYDNEWGYSRRVIDLIAYIAGVDAGK</sequence>
<feature type="chain" id="PRO_0000145546" description="Glyceraldehyde-3-phosphate dehydrogenase">
    <location>
        <begin position="1"/>
        <end position="337"/>
    </location>
</feature>
<feature type="active site" description="Nucleophile" evidence="2">
    <location>
        <position position="151"/>
    </location>
</feature>
<feature type="binding site" evidence="1">
    <location>
        <begin position="12"/>
        <end position="13"/>
    </location>
    <ligand>
        <name>NAD(+)</name>
        <dbReference type="ChEBI" id="CHEBI:57540"/>
    </ligand>
</feature>
<feature type="binding site" evidence="1">
    <location>
        <position position="34"/>
    </location>
    <ligand>
        <name>NAD(+)</name>
        <dbReference type="ChEBI" id="CHEBI:57540"/>
    </ligand>
</feature>
<feature type="binding site" evidence="1">
    <location>
        <position position="79"/>
    </location>
    <ligand>
        <name>NAD(+)</name>
        <dbReference type="ChEBI" id="CHEBI:57540"/>
    </ligand>
</feature>
<feature type="binding site" evidence="1">
    <location>
        <begin position="150"/>
        <end position="152"/>
    </location>
    <ligand>
        <name>D-glyceraldehyde 3-phosphate</name>
        <dbReference type="ChEBI" id="CHEBI:59776"/>
    </ligand>
</feature>
<feature type="binding site" evidence="1">
    <location>
        <position position="181"/>
    </location>
    <ligand>
        <name>D-glyceraldehyde 3-phosphate</name>
        <dbReference type="ChEBI" id="CHEBI:59776"/>
    </ligand>
</feature>
<feature type="binding site" evidence="1">
    <location>
        <begin position="210"/>
        <end position="211"/>
    </location>
    <ligand>
        <name>D-glyceraldehyde 3-phosphate</name>
        <dbReference type="ChEBI" id="CHEBI:59776"/>
    </ligand>
</feature>
<feature type="binding site" evidence="1">
    <location>
        <position position="233"/>
    </location>
    <ligand>
        <name>D-glyceraldehyde 3-phosphate</name>
        <dbReference type="ChEBI" id="CHEBI:59776"/>
    </ligand>
</feature>
<feature type="binding site" evidence="1">
    <location>
        <position position="315"/>
    </location>
    <ligand>
        <name>NAD(+)</name>
        <dbReference type="ChEBI" id="CHEBI:57540"/>
    </ligand>
</feature>
<feature type="site" description="Activates thiol group during catalysis" evidence="1">
    <location>
        <position position="178"/>
    </location>
</feature>
<organism>
    <name type="scientific">Coccidioides posadasii (strain C735)</name>
    <name type="common">Valley fever fungus</name>
    <dbReference type="NCBI Taxonomy" id="222929"/>
    <lineage>
        <taxon>Eukaryota</taxon>
        <taxon>Fungi</taxon>
        <taxon>Dikarya</taxon>
        <taxon>Ascomycota</taxon>
        <taxon>Pezizomycotina</taxon>
        <taxon>Eurotiomycetes</taxon>
        <taxon>Eurotiomycetidae</taxon>
        <taxon>Onygenales</taxon>
        <taxon>Onygenaceae</taxon>
        <taxon>Coccidioides</taxon>
    </lineage>
</organism>
<dbReference type="EC" id="1.2.1.12"/>
<dbReference type="EMBL" id="AF288134">
    <property type="protein sequence ID" value="AAN76496.1"/>
    <property type="molecule type" value="Genomic_DNA"/>
</dbReference>
<dbReference type="EMBL" id="ACFW01000025">
    <property type="protein sequence ID" value="EER27570.1"/>
    <property type="molecule type" value="Genomic_DNA"/>
</dbReference>
<dbReference type="RefSeq" id="XP_003069715.1">
    <property type="nucleotide sequence ID" value="XM_003069669.1"/>
</dbReference>
<dbReference type="SMR" id="Q8J1H3"/>
<dbReference type="KEGG" id="cpw:9695210"/>
<dbReference type="VEuPathDB" id="FungiDB:CPC735_029060"/>
<dbReference type="HOGENOM" id="CLU_030140_0_1_1"/>
<dbReference type="OrthoDB" id="1152826at2759"/>
<dbReference type="UniPathway" id="UPA00109">
    <property type="reaction ID" value="UER00184"/>
</dbReference>
<dbReference type="Proteomes" id="UP000009084">
    <property type="component" value="Unassembled WGS sequence"/>
</dbReference>
<dbReference type="GO" id="GO:0005829">
    <property type="term" value="C:cytosol"/>
    <property type="evidence" value="ECO:0007669"/>
    <property type="project" value="TreeGrafter"/>
</dbReference>
<dbReference type="GO" id="GO:0004365">
    <property type="term" value="F:glyceraldehyde-3-phosphate dehydrogenase (NAD+) (phosphorylating) activity"/>
    <property type="evidence" value="ECO:0007669"/>
    <property type="project" value="UniProtKB-EC"/>
</dbReference>
<dbReference type="GO" id="GO:0051287">
    <property type="term" value="F:NAD binding"/>
    <property type="evidence" value="ECO:0007669"/>
    <property type="project" value="InterPro"/>
</dbReference>
<dbReference type="GO" id="GO:0050661">
    <property type="term" value="F:NADP binding"/>
    <property type="evidence" value="ECO:0007669"/>
    <property type="project" value="InterPro"/>
</dbReference>
<dbReference type="GO" id="GO:0006006">
    <property type="term" value="P:glucose metabolic process"/>
    <property type="evidence" value="ECO:0007669"/>
    <property type="project" value="InterPro"/>
</dbReference>
<dbReference type="GO" id="GO:0006096">
    <property type="term" value="P:glycolytic process"/>
    <property type="evidence" value="ECO:0007669"/>
    <property type="project" value="UniProtKB-UniPathway"/>
</dbReference>
<dbReference type="CDD" id="cd18126">
    <property type="entry name" value="GAPDH_I_C"/>
    <property type="match status" value="1"/>
</dbReference>
<dbReference type="CDD" id="cd05214">
    <property type="entry name" value="GAPDH_I_N"/>
    <property type="match status" value="1"/>
</dbReference>
<dbReference type="FunFam" id="3.30.360.10:FF:000001">
    <property type="entry name" value="Glyceraldehyde-3-phosphate dehydrogenase"/>
    <property type="match status" value="1"/>
</dbReference>
<dbReference type="FunFam" id="3.40.50.720:FF:000020">
    <property type="entry name" value="Glyceraldehyde-3-phosphate dehydrogenase"/>
    <property type="match status" value="1"/>
</dbReference>
<dbReference type="Gene3D" id="3.30.360.10">
    <property type="entry name" value="Dihydrodipicolinate Reductase, domain 2"/>
    <property type="match status" value="1"/>
</dbReference>
<dbReference type="Gene3D" id="3.40.50.720">
    <property type="entry name" value="NAD(P)-binding Rossmann-like Domain"/>
    <property type="match status" value="1"/>
</dbReference>
<dbReference type="InterPro" id="IPR020831">
    <property type="entry name" value="GlycerAld/Erythrose_P_DH"/>
</dbReference>
<dbReference type="InterPro" id="IPR020830">
    <property type="entry name" value="GlycerAld_3-P_DH_AS"/>
</dbReference>
<dbReference type="InterPro" id="IPR020829">
    <property type="entry name" value="GlycerAld_3-P_DH_cat"/>
</dbReference>
<dbReference type="InterPro" id="IPR020828">
    <property type="entry name" value="GlycerAld_3-P_DH_NAD(P)-bd"/>
</dbReference>
<dbReference type="InterPro" id="IPR006424">
    <property type="entry name" value="Glyceraldehyde-3-P_DH_1"/>
</dbReference>
<dbReference type="InterPro" id="IPR036291">
    <property type="entry name" value="NAD(P)-bd_dom_sf"/>
</dbReference>
<dbReference type="NCBIfam" id="TIGR01534">
    <property type="entry name" value="GAPDH-I"/>
    <property type="match status" value="1"/>
</dbReference>
<dbReference type="PANTHER" id="PTHR10836">
    <property type="entry name" value="GLYCERALDEHYDE 3-PHOSPHATE DEHYDROGENASE"/>
    <property type="match status" value="1"/>
</dbReference>
<dbReference type="PANTHER" id="PTHR10836:SF76">
    <property type="entry name" value="GLYCERALDEHYDE-3-PHOSPHATE DEHYDROGENASE-RELATED"/>
    <property type="match status" value="1"/>
</dbReference>
<dbReference type="Pfam" id="PF02800">
    <property type="entry name" value="Gp_dh_C"/>
    <property type="match status" value="1"/>
</dbReference>
<dbReference type="Pfam" id="PF00044">
    <property type="entry name" value="Gp_dh_N"/>
    <property type="match status" value="1"/>
</dbReference>
<dbReference type="PIRSF" id="PIRSF000149">
    <property type="entry name" value="GAP_DH"/>
    <property type="match status" value="1"/>
</dbReference>
<dbReference type="PRINTS" id="PR00078">
    <property type="entry name" value="G3PDHDRGNASE"/>
</dbReference>
<dbReference type="SMART" id="SM00846">
    <property type="entry name" value="Gp_dh_N"/>
    <property type="match status" value="1"/>
</dbReference>
<dbReference type="SUPFAM" id="SSF55347">
    <property type="entry name" value="Glyceraldehyde-3-phosphate dehydrogenase-like, C-terminal domain"/>
    <property type="match status" value="1"/>
</dbReference>
<dbReference type="SUPFAM" id="SSF51735">
    <property type="entry name" value="NAD(P)-binding Rossmann-fold domains"/>
    <property type="match status" value="1"/>
</dbReference>
<dbReference type="PROSITE" id="PS00071">
    <property type="entry name" value="GAPDH"/>
    <property type="match status" value="1"/>
</dbReference>
<reference key="1">
    <citation type="submission" date="2000-07" db="EMBL/GenBank/DDBJ databases">
        <title>Isolation and evaluation of expression of the glyceraldehye-3-phosphate dehydrogenase gene of Coccidioides immitis.</title>
        <authorList>
            <person name="Hung C.-Y."/>
            <person name="Yu J.-J."/>
            <person name="Cole G.T."/>
        </authorList>
    </citation>
    <scope>NUCLEOTIDE SEQUENCE [GENOMIC DNA]</scope>
    <source>
        <strain>C735</strain>
    </source>
</reference>
<reference key="2">
    <citation type="journal article" date="2009" name="Genome Res.">
        <title>Comparative genomic analyses of the human fungal pathogens Coccidioides and their relatives.</title>
        <authorList>
            <person name="Sharpton T.J."/>
            <person name="Stajich J.E."/>
            <person name="Rounsley S.D."/>
            <person name="Gardner M.J."/>
            <person name="Wortman J.R."/>
            <person name="Jordar V.S."/>
            <person name="Maiti R."/>
            <person name="Kodira C.D."/>
            <person name="Neafsey D.E."/>
            <person name="Zeng Q."/>
            <person name="Hung C.-Y."/>
            <person name="McMahan C."/>
            <person name="Muszewska A."/>
            <person name="Grynberg M."/>
            <person name="Mandel M.A."/>
            <person name="Kellner E.M."/>
            <person name="Barker B.M."/>
            <person name="Galgiani J.N."/>
            <person name="Orbach M.J."/>
            <person name="Kirkland T.N."/>
            <person name="Cole G.T."/>
            <person name="Henn M.R."/>
            <person name="Birren B.W."/>
            <person name="Taylor J.W."/>
        </authorList>
    </citation>
    <scope>NUCLEOTIDE SEQUENCE [LARGE SCALE GENOMIC DNA]</scope>
    <source>
        <strain>C735</strain>
    </source>
</reference>
<comment type="catalytic activity">
    <reaction evidence="2">
        <text>D-glyceraldehyde 3-phosphate + phosphate + NAD(+) = (2R)-3-phospho-glyceroyl phosphate + NADH + H(+)</text>
        <dbReference type="Rhea" id="RHEA:10300"/>
        <dbReference type="ChEBI" id="CHEBI:15378"/>
        <dbReference type="ChEBI" id="CHEBI:43474"/>
        <dbReference type="ChEBI" id="CHEBI:57540"/>
        <dbReference type="ChEBI" id="CHEBI:57604"/>
        <dbReference type="ChEBI" id="CHEBI:57945"/>
        <dbReference type="ChEBI" id="CHEBI:59776"/>
        <dbReference type="EC" id="1.2.1.12"/>
    </reaction>
</comment>
<comment type="pathway">
    <text>Carbohydrate degradation; glycolysis; pyruvate from D-glyceraldehyde 3-phosphate: step 1/5.</text>
</comment>
<comment type="subunit">
    <text evidence="1">Homotetramer.</text>
</comment>
<comment type="subcellular location">
    <subcellularLocation>
        <location evidence="1">Cytoplasm</location>
    </subcellularLocation>
</comment>
<comment type="similarity">
    <text evidence="3">Belongs to the glyceraldehyde-3-phosphate dehydrogenase family.</text>
</comment>